<proteinExistence type="inferred from homology"/>
<evidence type="ECO:0000255" key="1">
    <source>
        <dbReference type="HAMAP-Rule" id="MF_00395"/>
    </source>
</evidence>
<keyword id="KW-0249">Electron transport</keyword>
<keyword id="KW-0472">Membrane</keyword>
<keyword id="KW-0602">Photosynthesis</keyword>
<keyword id="KW-0793">Thylakoid</keyword>
<keyword id="KW-0812">Transmembrane</keyword>
<keyword id="KW-1133">Transmembrane helix</keyword>
<keyword id="KW-0813">Transport</keyword>
<feature type="chain" id="PRO_1000049579" description="Cytochrome b6-f complex subunit 8">
    <location>
        <begin position="1"/>
        <end position="29"/>
    </location>
</feature>
<feature type="transmembrane region" description="Helical" evidence="1">
    <location>
        <begin position="3"/>
        <end position="23"/>
    </location>
</feature>
<comment type="function">
    <text evidence="1">Component of the cytochrome b6-f complex, which mediates electron transfer between photosystem II (PSII) and photosystem I (PSI), cyclic electron flow around PSI, and state transitions.</text>
</comment>
<comment type="subunit">
    <text evidence="1">The 4 large subunits of the cytochrome b6-f complex are cytochrome b6, subunit IV (17 kDa polypeptide, PetD), cytochrome f and the Rieske protein, while the 4 small subunits are PetG, PetL, PetM and PetN. The complex functions as a dimer.</text>
</comment>
<comment type="subcellular location">
    <subcellularLocation>
        <location evidence="1">Cellular thylakoid membrane</location>
        <topology evidence="1">Single-pass membrane protein</topology>
    </subcellularLocation>
</comment>
<comment type="similarity">
    <text evidence="1">Belongs to the PetN family.</text>
</comment>
<name>PETN_SYNJA</name>
<sequence>MDIITFGWVAVAAFFALSIAFVVWGRNGM</sequence>
<organism>
    <name type="scientific">Synechococcus sp. (strain JA-3-3Ab)</name>
    <name type="common">Cyanobacteria bacterium Yellowstone A-Prime</name>
    <dbReference type="NCBI Taxonomy" id="321327"/>
    <lineage>
        <taxon>Bacteria</taxon>
        <taxon>Bacillati</taxon>
        <taxon>Cyanobacteriota</taxon>
        <taxon>Cyanophyceae</taxon>
        <taxon>Synechococcales</taxon>
        <taxon>Synechococcaceae</taxon>
        <taxon>Synechococcus</taxon>
    </lineage>
</organism>
<accession>Q2JR85</accession>
<protein>
    <recommendedName>
        <fullName evidence="1">Cytochrome b6-f complex subunit 8</fullName>
    </recommendedName>
    <alternativeName>
        <fullName evidence="1">Cytochrome b6-f complex subunit PetN</fullName>
    </alternativeName>
    <alternativeName>
        <fullName evidence="1">Cytochrome b6-f complex subunit VIII</fullName>
    </alternativeName>
</protein>
<reference key="1">
    <citation type="journal article" date="2007" name="ISME J.">
        <title>Population level functional diversity in a microbial community revealed by comparative genomic and metagenomic analyses.</title>
        <authorList>
            <person name="Bhaya D."/>
            <person name="Grossman A.R."/>
            <person name="Steunou A.-S."/>
            <person name="Khuri N."/>
            <person name="Cohan F.M."/>
            <person name="Hamamura N."/>
            <person name="Melendrez M.C."/>
            <person name="Bateson M.M."/>
            <person name="Ward D.M."/>
            <person name="Heidelberg J.F."/>
        </authorList>
    </citation>
    <scope>NUCLEOTIDE SEQUENCE [LARGE SCALE GENOMIC DNA]</scope>
    <source>
        <strain>JA-3-3Ab</strain>
    </source>
</reference>
<dbReference type="EMBL" id="CP000239">
    <property type="protein sequence ID" value="ABD00878.1"/>
    <property type="molecule type" value="Genomic_DNA"/>
</dbReference>
<dbReference type="RefSeq" id="WP_011431548.1">
    <property type="nucleotide sequence ID" value="NC_007775.1"/>
</dbReference>
<dbReference type="SMR" id="Q2JR85"/>
<dbReference type="STRING" id="321327.CYA_2776"/>
<dbReference type="KEGG" id="cya:CYA_2776"/>
<dbReference type="HOGENOM" id="CLU_215774_1_0_3"/>
<dbReference type="Proteomes" id="UP000008818">
    <property type="component" value="Chromosome"/>
</dbReference>
<dbReference type="GO" id="GO:0009512">
    <property type="term" value="C:cytochrome b6f complex"/>
    <property type="evidence" value="ECO:0007669"/>
    <property type="project" value="InterPro"/>
</dbReference>
<dbReference type="GO" id="GO:0031676">
    <property type="term" value="C:plasma membrane-derived thylakoid membrane"/>
    <property type="evidence" value="ECO:0007669"/>
    <property type="project" value="UniProtKB-SubCell"/>
</dbReference>
<dbReference type="GO" id="GO:0045158">
    <property type="term" value="F:electron transporter, transferring electrons within cytochrome b6/f complex of photosystem II activity"/>
    <property type="evidence" value="ECO:0007669"/>
    <property type="project" value="InterPro"/>
</dbReference>
<dbReference type="GO" id="GO:0017004">
    <property type="term" value="P:cytochrome complex assembly"/>
    <property type="evidence" value="ECO:0007669"/>
    <property type="project" value="UniProtKB-UniRule"/>
</dbReference>
<dbReference type="GO" id="GO:0015979">
    <property type="term" value="P:photosynthesis"/>
    <property type="evidence" value="ECO:0007669"/>
    <property type="project" value="UniProtKB-KW"/>
</dbReference>
<dbReference type="HAMAP" id="MF_00395">
    <property type="entry name" value="Cytb6_f_PetN"/>
    <property type="match status" value="1"/>
</dbReference>
<dbReference type="InterPro" id="IPR036143">
    <property type="entry name" value="Cytochr_b6-f_cplx_su8_sf"/>
</dbReference>
<dbReference type="InterPro" id="IPR005497">
    <property type="entry name" value="Cytochrome_b6-f_cplx_su8"/>
</dbReference>
<dbReference type="Pfam" id="PF03742">
    <property type="entry name" value="PetN"/>
    <property type="match status" value="1"/>
</dbReference>
<dbReference type="SUPFAM" id="SSF103451">
    <property type="entry name" value="PetN subunit of the cytochrome b6f complex"/>
    <property type="match status" value="1"/>
</dbReference>
<gene>
    <name evidence="1" type="primary">petN</name>
    <name type="ordered locus">CYA_2776</name>
</gene>